<name>PKS1_ELSFA</name>
<protein>
    <recommendedName>
        <fullName evidence="12">Non-reducing polyketide synthase 1</fullName>
        <ecNumber evidence="14">2.3.1.-</ecNumber>
    </recommendedName>
    <alternativeName>
        <fullName evidence="12">Elsinochromes biosynthesis cluster protein PKS1</fullName>
    </alternativeName>
</protein>
<organism>
    <name type="scientific">Elsinoe fawcettii</name>
    <name type="common">Citrus scab fungus</name>
    <name type="synonym">Sphaceloma fawcettii</name>
    <dbReference type="NCBI Taxonomy" id="40997"/>
    <lineage>
        <taxon>Eukaryota</taxon>
        <taxon>Fungi</taxon>
        <taxon>Dikarya</taxon>
        <taxon>Ascomycota</taxon>
        <taxon>Pezizomycotina</taxon>
        <taxon>Dothideomycetes</taxon>
        <taxon>Dothideomycetidae</taxon>
        <taxon>Myriangiales</taxon>
        <taxon>Elsinoaceae</taxon>
        <taxon>Elsinoe</taxon>
    </lineage>
</organism>
<feature type="chain" id="PRO_0000445818" description="Non-reducing polyketide synthase 1">
    <location>
        <begin position="1"/>
        <end position="2192"/>
    </location>
</feature>
<feature type="domain" description="Ketosynthase family 3 (KS3)" evidence="5">
    <location>
        <begin position="374"/>
        <end position="806"/>
    </location>
</feature>
<feature type="domain" description="PKS/mFAS DH" evidence="6">
    <location>
        <begin position="1295"/>
        <end position="1605"/>
    </location>
</feature>
<feature type="domain" description="Carrier 1" evidence="4">
    <location>
        <begin position="1670"/>
        <end position="1747"/>
    </location>
</feature>
<feature type="domain" description="Carrier 2" evidence="4">
    <location>
        <begin position="1798"/>
        <end position="1875"/>
    </location>
</feature>
<feature type="region of interest" description="N-terminal acylcarrier protein transacylase domain (SAT)" evidence="3">
    <location>
        <begin position="5"/>
        <end position="243"/>
    </location>
</feature>
<feature type="region of interest" description="Malonyl-CoA:ACP transacylase (MAT) domain" evidence="3">
    <location>
        <begin position="905"/>
        <end position="1218"/>
    </location>
</feature>
<feature type="region of interest" description="Product template (PT) domain" evidence="3">
    <location>
        <begin position="1293"/>
        <end position="1610"/>
    </location>
</feature>
<feature type="region of interest" description="N-terminal hotdog fold" evidence="6">
    <location>
        <begin position="1295"/>
        <end position="1430"/>
    </location>
</feature>
<feature type="region of interest" description="C-terminal hotdog fold" evidence="6">
    <location>
        <begin position="1458"/>
        <end position="1605"/>
    </location>
</feature>
<feature type="region of interest" description="Disordered" evidence="8">
    <location>
        <begin position="1639"/>
        <end position="1668"/>
    </location>
</feature>
<feature type="region of interest" description="Disordered" evidence="8">
    <location>
        <begin position="1748"/>
        <end position="1788"/>
    </location>
</feature>
<feature type="region of interest" description="Thioesterase (TE) domain" evidence="3">
    <location>
        <begin position="1913"/>
        <end position="2164"/>
    </location>
</feature>
<feature type="compositionally biased region" description="Acidic residues" evidence="8">
    <location>
        <begin position="1754"/>
        <end position="1764"/>
    </location>
</feature>
<feature type="active site" description="For beta-ketoacyl synthase activity" evidence="5">
    <location>
        <position position="546"/>
    </location>
</feature>
<feature type="active site" description="For beta-ketoacyl synthase activity" evidence="5">
    <location>
        <position position="681"/>
    </location>
</feature>
<feature type="active site" description="For beta-ketoacyl synthase activity" evidence="5">
    <location>
        <position position="724"/>
    </location>
</feature>
<feature type="active site" description="For acyl/malonyl transferase activity" evidence="7">
    <location>
        <position position="993"/>
    </location>
</feature>
<feature type="active site" description="Proton acceptor; for dehydratase activity" evidence="6">
    <location>
        <position position="1327"/>
    </location>
</feature>
<feature type="active site" description="Proton donor; for dehydratase activity" evidence="6">
    <location>
        <position position="1518"/>
    </location>
</feature>
<feature type="modified residue" description="O-(pantetheine 4'-phosphoryl)serine" evidence="4">
    <location>
        <position position="1707"/>
    </location>
</feature>
<feature type="modified residue" description="O-(pantetheine 4'-phosphoryl)serine" evidence="4">
    <location>
        <position position="1835"/>
    </location>
</feature>
<comment type="function">
    <text evidence="9 10 13">Non-reducing polyketide synthase; part of the gene cluster that mediates the biosynthesis of elsinochromes, pigments consisting of at least four interconvertible tautomers (A, B, C and D) that have a core phenolic quinone to which various side chains are attached and which play an important role in fungal pathogenesis (PubMed:18321192, PubMed:18957608). The non-reducing polyketide synthase PKS1 was proposed to iteratively catalyze decarboxylation between acetyl-CoA and malonyl-CoA subunits for polyketide chain elongation. The released polyketide undergoes cyclization to form an aromatic ring, and proceeds via serial modification steps to produce the heptaketide back- bone of elsinochrome. As elsinochrome has a symmetrical structure, two identical heptaketides are fused to form a core 1,2-dihydrobenzo-perylene ring structure, which can then be successively modified to produce the various derivatives of elsinochrome. Some of these reactions may be cooperatively carried out, at least in part, by the products of RDT1, OXR1 and PKS1. PRF1, embedded within the elsinochrome cluster possibly functions to stabilize some of the biosynthetic enzymes required for elsinochrome production. As prefoldin is a hexamer containing 2 a and 4 b subunits, additional prefoldin subunits, whose coding genes may not immediately link to the elsinochrome biosynthetic gene cluster, are required to fulfill the chaperone function. In addition, no methyltransferase-coding gene exists within the biosynthetic gene cluster, even though elsinochrome has four methyl groups at positions C3, C7, C8 and C12. Apparently, the identified gene cluster does not contain the entire entourage of genes responsible for elsinochrome biosynthesis. Once elsinochrome is synthesized, it must be exported outside the fungal cells, which is probably accomplished by the ECT1 transporter, to avoid toxicity (PubMed:21199563).</text>
</comment>
<comment type="induction">
    <text evidence="9 10 11">The promoter contains 4 ambient pH-regulated pacC-binding consensus motifs (GCCARG) and multiple cAMP-inducible C/EBP-binding motifs (CCAAT or CAAT). In addition, the promoter contains 3 MRAGGGR and 2 CATTCY consensus motifs that have been shown to serve as binding sites for the conidial formation-related brlA and abaA transcriptional activators (PubMed:18321192). Expression is up-regulated on exposure to light, in the presence of large amounts of glucose, during nitrogen starvation or at alkaline pH, all conditions highly conducive to elsinochrome accumulation (PubMed:18321192, PubMed:18957608, PubMed:20965063). Expression is positively regulated by the cluster-specific transcription factor TSF1 (PubMed:18957608). Expression is also positively regulated by the STE12 transcription factor in a TSF1-independent manner (PubMed:20965063).</text>
</comment>
<comment type="domain">
    <text evidence="2">Multidomain protein; including a starter unit:ACP transacylase (SAT) that selects the starter unit; a ketosynthase (KS) that catalyzes repeated decarboxylative condensation to elongate the polyketide backbone; a malonyl-CoA:ACP transacylase (MAT) that selects and transfers the extender unit malonyl-CoA; a product template (PT) domain that controls the immediate cyclization regioselectivity of the reactive polyketide backbone; and an acyl-carrier protein (ACP) that serves as the tether of the growing and completed polyketide via its phosphopantetheinyl arm.</text>
</comment>
<comment type="domain">
    <text evidence="1">The release of the polyketide chain from the non-reducing polyketide synthase is mediated by the thioesterase (TE) domain localized at the C-ter of the protein.</text>
</comment>
<comment type="disruption phenotype">
    <text evidence="9 10">Blocks the expression of the elsinochrome cluster genes RDT1, TSF1, PRF1 and ECT1 (PubMed:18957608). Abrogates elsinochrome production, drastically reduces conidiation, and significantly decreases lesion formation on rough lemon leaves (PubMed:18321192).</text>
</comment>
<sequence length="2192" mass="238122">MSNVLLLGDQTADQSPLLRKLVLRRNDALVTTFHEQVSVALRDEVSKLPARQRQDIPSFLKLNTLVDLYYQGDKRLPILESTFVALTQLGHYIGYFSENPDRLPYAANTRVLGLCTGSLAATVIVSAKSLSELVSLAVEAVRIAFRAGACVDAAKRVLQQPGEEKEPWSTIVMNLSEKDAQKALDEFHSSTGTSGPSRAYISAISTMAVTISGPPSTTQKLFSESADLSTKNRVSIPIYAPYHAAHLHSERDLQRIIPDSSRALLKKYQPHTLLHSSATGECLVADNTCDLMSLALVDFLREPVRWDRLLEESISQIIATPKAPAKIFTIGVSNVANSMAAALKASGQATVSITDHTSWIVPDDYNSTRGRTQNDKIAIVGMSGRFPSAASVDALWELLEKGLDVHRKIPADRFDADAHCDPSGKSKNKSHTPYGCFIDEPGLFDPRFFNMSPREAAQTDPMGRLALVTAYEALEESGYVPNRTPSTKLHRIGTFYGQTSDDWREINAAENVDTYFITGGVRAFAPGRINYYFKFSGPSFSIDTACSSSLAAIQLACTSLWAGDCDTACAGGLNVLTNPDIFSGLSKGQFLSKTGSCKTYDNDADGYCRGDGCGSVILKRYEDAIADKDNILGCILGAATNHSAEAVSITHPHAGNQEFLFKKVLAEAGVDAHEISYVEMHGTGTQAGDGIEMTSVTNAFAPPNRRRTPDEKLFLGAIKANVGHGEAASGINSLAKVLMMFKKNAIPANVGIKGVMNESFPKDLGERNVHIPLKQVEFPRNGDAPRKIFLNNFSAAGGNTSLLLEDGPVRKPSTVKDPRSTLPITVTARSIASLKRNIDNLKSYLSKTPEASLTSLSYTSTARRIQHNYRIAFPATDINKVSEALDAQIKDSYSPVAITATRVAFCFTGQGSQYTGLGQKLYQDLPSFKADIDQLNQLAESHNLPSFLELFDGTDVATLSPVKVQLGTACIQVALSRMWESWGIKPSAVIGHSLGEYAALHVAGVISASDMVYLVGRRAELLVKDCTPHTHGMLAVKASVDAIRNALGSKMTEVACINGPEETVLCGSSEIVTAANEVLTSKGMKSTKLNVPFAFHSAQVDPILESFRTTASSVSFKKPAVPVLSPLSGDIITDVGVIGPEYLAKHARETVNFSQALESGQKAKIFDGKTAWLEIGAHPVCLGMVKGSVETTATAPSLRRGEDAWKTLANSMCALFLAGVYINFDEYHRAFNDAQELLHLPTYSFDDKKYWLDYHNNWTLTKGEAPQPTKAIEAAPFEAAAPVERTYKKLSDSCQKIIDEEFSANAGRVLVQSDVCQPNLRRVAMGHQVNDTALCPSSLYFDMAMTVADYIYKALRPSAPKIGYNVAHMEVPKPFIIKNVAPPEGQHLQLEAHADLEEGVAKLVFRSVTPNGKQLVVHAHCTVKFEDINTWQEGWENISFMVKSQIENLQRKTRTQEAHVIGRGLAYKLFKVFVNYAKPYRGMEEIILDNQTTEATASVHFQTKPEDGEFFFPAYWCDSMAHLGGFIVNATDLCDSDNYVSVSHGWGSIKVAKEMSANKKYRNYVRMVEKPGNVTQGDVYIFDGDEIIAVVGALKFQKIPRKVLNTFLPPQKAGSAVSAPVAPPAAARPALKQAPRINTQAQPAKAVPKQVTVAAPTPKAAPKKADLKKPAGPTIITRVMHIIAAETDVDSSELVDQAAFENLGVDSLMSLTISARFREELDMDISSTLFTDFPTVGEMKKFFSQYDGEVGTPEQDDSDSDSETSGDASTPMSEVGTPMTIPSSAVSESGKFDLDTAAPASGEVSIARQIVATEMGVEIAEVTDQADLADMGMDSLMSLTILSELREKTGIDLPSTFLMTNPTIEDVENALDMRPKARVAPVAVPAPSNRRPSSPQLDKVNEKLNASRSADISKYPAATSVLLQGNPKIATKKIFFLPDGSGSATSYVSIPNIGSDVCAFGLNCPFMKSPEQWSCGIEICAMVYLKEIKRRKPTGPYIIGGWSAGGVIAYAVAQALLANNEEVEKLLLLDSPCPVNLDPLPARLHIFFNEIGLLGTGDPSKTPKWLLPHFSAAIRSLSDYQPQPTIKPVKTYAIWCREGVAGNPGDPRPPPAEDEDPAPMKWLLNHRTDFTDNGWGKLCGVENMKYGVMGGHHFSMMKPPHVSIFDYSIVDDEANMRQAEDLGQLIKEGLSM</sequence>
<evidence type="ECO:0000250" key="1">
    <source>
        <dbReference type="UniProtKB" id="Q5ATJ7"/>
    </source>
</evidence>
<evidence type="ECO:0000250" key="2">
    <source>
        <dbReference type="UniProtKB" id="Q5B0D0"/>
    </source>
</evidence>
<evidence type="ECO:0000255" key="3"/>
<evidence type="ECO:0000255" key="4">
    <source>
        <dbReference type="PROSITE-ProRule" id="PRU00258"/>
    </source>
</evidence>
<evidence type="ECO:0000255" key="5">
    <source>
        <dbReference type="PROSITE-ProRule" id="PRU01348"/>
    </source>
</evidence>
<evidence type="ECO:0000255" key="6">
    <source>
        <dbReference type="PROSITE-ProRule" id="PRU01363"/>
    </source>
</evidence>
<evidence type="ECO:0000255" key="7">
    <source>
        <dbReference type="PROSITE-ProRule" id="PRU10022"/>
    </source>
</evidence>
<evidence type="ECO:0000256" key="8">
    <source>
        <dbReference type="SAM" id="MobiDB-lite"/>
    </source>
</evidence>
<evidence type="ECO:0000269" key="9">
    <source>
    </source>
</evidence>
<evidence type="ECO:0000269" key="10">
    <source>
    </source>
</evidence>
<evidence type="ECO:0000269" key="11">
    <source>
    </source>
</evidence>
<evidence type="ECO:0000303" key="12">
    <source>
    </source>
</evidence>
<evidence type="ECO:0000303" key="13">
    <source>
    </source>
</evidence>
<evidence type="ECO:0000305" key="14">
    <source>
    </source>
</evidence>
<dbReference type="EC" id="2.3.1.-" evidence="14"/>
<dbReference type="EMBL" id="EU086466">
    <property type="protein sequence ID" value="ABU63483.1"/>
    <property type="molecule type" value="Genomic_DNA"/>
</dbReference>
<dbReference type="SMR" id="A7UMW1"/>
<dbReference type="ESTHER" id="elsfa-pks1">
    <property type="family name" value="Thioesterase"/>
</dbReference>
<dbReference type="GO" id="GO:0004315">
    <property type="term" value="F:3-oxoacyl-[acyl-carrier-protein] synthase activity"/>
    <property type="evidence" value="ECO:0007669"/>
    <property type="project" value="InterPro"/>
</dbReference>
<dbReference type="GO" id="GO:0004312">
    <property type="term" value="F:fatty acid synthase activity"/>
    <property type="evidence" value="ECO:0007669"/>
    <property type="project" value="TreeGrafter"/>
</dbReference>
<dbReference type="GO" id="GO:0031177">
    <property type="term" value="F:phosphopantetheine binding"/>
    <property type="evidence" value="ECO:0007669"/>
    <property type="project" value="InterPro"/>
</dbReference>
<dbReference type="GO" id="GO:0006633">
    <property type="term" value="P:fatty acid biosynthetic process"/>
    <property type="evidence" value="ECO:0007669"/>
    <property type="project" value="InterPro"/>
</dbReference>
<dbReference type="GO" id="GO:0044550">
    <property type="term" value="P:secondary metabolite biosynthetic process"/>
    <property type="evidence" value="ECO:0007669"/>
    <property type="project" value="TreeGrafter"/>
</dbReference>
<dbReference type="CDD" id="cd00833">
    <property type="entry name" value="PKS"/>
    <property type="match status" value="1"/>
</dbReference>
<dbReference type="FunFam" id="3.40.366.10:FF:000002">
    <property type="entry name" value="Probable polyketide synthase 2"/>
    <property type="match status" value="1"/>
</dbReference>
<dbReference type="FunFam" id="1.10.1200.10:FF:000011">
    <property type="entry name" value="Sterigmatocystin biosynthesis polyketide synthase"/>
    <property type="match status" value="2"/>
</dbReference>
<dbReference type="FunFam" id="3.10.129.110:FF:000001">
    <property type="entry name" value="Sterigmatocystin biosynthesis polyketide synthase"/>
    <property type="match status" value="1"/>
</dbReference>
<dbReference type="Gene3D" id="3.30.70.3290">
    <property type="match status" value="1"/>
</dbReference>
<dbReference type="Gene3D" id="3.40.47.10">
    <property type="match status" value="1"/>
</dbReference>
<dbReference type="Gene3D" id="1.10.1200.10">
    <property type="entry name" value="ACP-like"/>
    <property type="match status" value="2"/>
</dbReference>
<dbReference type="Gene3D" id="3.40.50.1820">
    <property type="entry name" value="alpha/beta hydrolase"/>
    <property type="match status" value="1"/>
</dbReference>
<dbReference type="Gene3D" id="3.40.366.10">
    <property type="entry name" value="Malonyl-Coenzyme A Acyl Carrier Protein, domain 2"/>
    <property type="match status" value="2"/>
</dbReference>
<dbReference type="Gene3D" id="3.10.129.110">
    <property type="entry name" value="Polyketide synthase dehydratase"/>
    <property type="match status" value="1"/>
</dbReference>
<dbReference type="InterPro" id="IPR029058">
    <property type="entry name" value="AB_hydrolase_fold"/>
</dbReference>
<dbReference type="InterPro" id="IPR001227">
    <property type="entry name" value="Ac_transferase_dom_sf"/>
</dbReference>
<dbReference type="InterPro" id="IPR036736">
    <property type="entry name" value="ACP-like_sf"/>
</dbReference>
<dbReference type="InterPro" id="IPR014043">
    <property type="entry name" value="Acyl_transferase_dom"/>
</dbReference>
<dbReference type="InterPro" id="IPR016035">
    <property type="entry name" value="Acyl_Trfase/lysoPLipase"/>
</dbReference>
<dbReference type="InterPro" id="IPR018201">
    <property type="entry name" value="Ketoacyl_synth_AS"/>
</dbReference>
<dbReference type="InterPro" id="IPR014031">
    <property type="entry name" value="Ketoacyl_synth_C"/>
</dbReference>
<dbReference type="InterPro" id="IPR014030">
    <property type="entry name" value="Ketoacyl_synth_N"/>
</dbReference>
<dbReference type="InterPro" id="IPR016036">
    <property type="entry name" value="Malonyl_transacylase_ACP-bd"/>
</dbReference>
<dbReference type="InterPro" id="IPR020841">
    <property type="entry name" value="PKS_Beta-ketoAc_synthase_dom"/>
</dbReference>
<dbReference type="InterPro" id="IPR042104">
    <property type="entry name" value="PKS_dehydratase_sf"/>
</dbReference>
<dbReference type="InterPro" id="IPR049900">
    <property type="entry name" value="PKS_mFAS_DH"/>
</dbReference>
<dbReference type="InterPro" id="IPR050091">
    <property type="entry name" value="PKS_NRPS_Biosynth_Enz"/>
</dbReference>
<dbReference type="InterPro" id="IPR020806">
    <property type="entry name" value="PKS_PP-bd"/>
</dbReference>
<dbReference type="InterPro" id="IPR009081">
    <property type="entry name" value="PP-bd_ACP"/>
</dbReference>
<dbReference type="InterPro" id="IPR006162">
    <property type="entry name" value="Ppantetheine_attach_site"/>
</dbReference>
<dbReference type="InterPro" id="IPR030918">
    <property type="entry name" value="PT_fungal_PKS"/>
</dbReference>
<dbReference type="InterPro" id="IPR032088">
    <property type="entry name" value="SAT"/>
</dbReference>
<dbReference type="InterPro" id="IPR001031">
    <property type="entry name" value="Thioesterase"/>
</dbReference>
<dbReference type="InterPro" id="IPR016039">
    <property type="entry name" value="Thiolase-like"/>
</dbReference>
<dbReference type="NCBIfam" id="TIGR04532">
    <property type="entry name" value="PT_fungal_PKS"/>
    <property type="match status" value="1"/>
</dbReference>
<dbReference type="PANTHER" id="PTHR43775">
    <property type="entry name" value="FATTY ACID SYNTHASE"/>
    <property type="match status" value="1"/>
</dbReference>
<dbReference type="PANTHER" id="PTHR43775:SF37">
    <property type="entry name" value="SI:DKEY-61P9.11"/>
    <property type="match status" value="1"/>
</dbReference>
<dbReference type="Pfam" id="PF00698">
    <property type="entry name" value="Acyl_transf_1"/>
    <property type="match status" value="1"/>
</dbReference>
<dbReference type="Pfam" id="PF22621">
    <property type="entry name" value="CurL-like_PKS_C"/>
    <property type="match status" value="1"/>
</dbReference>
<dbReference type="Pfam" id="PF00109">
    <property type="entry name" value="ketoacyl-synt"/>
    <property type="match status" value="1"/>
</dbReference>
<dbReference type="Pfam" id="PF02801">
    <property type="entry name" value="Ketoacyl-synt_C"/>
    <property type="match status" value="1"/>
</dbReference>
<dbReference type="Pfam" id="PF00550">
    <property type="entry name" value="PP-binding"/>
    <property type="match status" value="2"/>
</dbReference>
<dbReference type="Pfam" id="PF16073">
    <property type="entry name" value="SAT"/>
    <property type="match status" value="1"/>
</dbReference>
<dbReference type="Pfam" id="PF00975">
    <property type="entry name" value="Thioesterase"/>
    <property type="match status" value="1"/>
</dbReference>
<dbReference type="SMART" id="SM00827">
    <property type="entry name" value="PKS_AT"/>
    <property type="match status" value="1"/>
</dbReference>
<dbReference type="SMART" id="SM00825">
    <property type="entry name" value="PKS_KS"/>
    <property type="match status" value="1"/>
</dbReference>
<dbReference type="SMART" id="SM00823">
    <property type="entry name" value="PKS_PP"/>
    <property type="match status" value="2"/>
</dbReference>
<dbReference type="SUPFAM" id="SSF47336">
    <property type="entry name" value="ACP-like"/>
    <property type="match status" value="2"/>
</dbReference>
<dbReference type="SUPFAM" id="SSF53474">
    <property type="entry name" value="alpha/beta-Hydrolases"/>
    <property type="match status" value="1"/>
</dbReference>
<dbReference type="SUPFAM" id="SSF52151">
    <property type="entry name" value="FabD/lysophospholipase-like"/>
    <property type="match status" value="1"/>
</dbReference>
<dbReference type="SUPFAM" id="SSF55048">
    <property type="entry name" value="Probable ACP-binding domain of malonyl-CoA ACP transacylase"/>
    <property type="match status" value="1"/>
</dbReference>
<dbReference type="SUPFAM" id="SSF53901">
    <property type="entry name" value="Thiolase-like"/>
    <property type="match status" value="1"/>
</dbReference>
<dbReference type="PROSITE" id="PS50075">
    <property type="entry name" value="CARRIER"/>
    <property type="match status" value="2"/>
</dbReference>
<dbReference type="PROSITE" id="PS00606">
    <property type="entry name" value="KS3_1"/>
    <property type="match status" value="1"/>
</dbReference>
<dbReference type="PROSITE" id="PS52004">
    <property type="entry name" value="KS3_2"/>
    <property type="match status" value="1"/>
</dbReference>
<dbReference type="PROSITE" id="PS00012">
    <property type="entry name" value="PHOSPHOPANTETHEINE"/>
    <property type="match status" value="1"/>
</dbReference>
<dbReference type="PROSITE" id="PS52019">
    <property type="entry name" value="PKS_MFAS_DH"/>
    <property type="match status" value="1"/>
</dbReference>
<gene>
    <name evidence="12" type="primary">PKS1</name>
</gene>
<reference key="1">
    <citation type="journal article" date="2008" name="Microbiology">
        <title>Determination of a transcriptional regulator-like gene involved in biosynthesis of elsinochrome phytotoxin by the citrus scab fungus, Elsinoe fawcettii.</title>
        <authorList>
            <person name="Chung K.R."/>
            <person name="Liao H.L."/>
        </authorList>
    </citation>
    <scope>NUCLEOTIDE SEQUENCE [GENOMIC DNA]</scope>
    <scope>FUNCTION</scope>
    <scope>INDUCTION</scope>
    <scope>DISRUPTION PHENOTYPE</scope>
</reference>
<reference key="2">
    <citation type="journal article" date="2008" name="Mol. Plant Microbe Interact.">
        <title>Genetic dissection defines the roles of elsinochrome phytotoxin for fungal pathogenesis and conidiation of the citrus pathogen Elsinoe fawcettii.</title>
        <authorList>
            <person name="Liao H.L."/>
            <person name="Chung K.R."/>
        </authorList>
    </citation>
    <scope>NUCLEOTIDE SEQUENCE [GENOMIC DNA]</scope>
    <scope>IDENTIFICATION</scope>
    <scope>FUNCTION</scope>
    <scope>DISRUPTION PHENOTYPE</scope>
</reference>
<reference key="3">
    <citation type="journal article" date="2010" name="Fungal Biol.">
        <title>Transcriptional regulation of elsinochrome phytotoxin biosynthesis by an EfSTE12 activator in the citrus scab pathogen Elsinoe fawcettii.</title>
        <authorList>
            <person name="Yang S.L."/>
            <person name="Chung K.R."/>
        </authorList>
    </citation>
    <scope>INDUCTION</scope>
</reference>
<reference key="4">
    <citation type="journal article" date="2011" name="Mol. Plant Pathol.">
        <title>Elsinoe fawcettii and Elsinoe australis: the fungal pathogens causing citrus scab.</title>
        <authorList>
            <person name="Chung K.R."/>
        </authorList>
    </citation>
    <scope>REVIEW</scope>
</reference>
<accession>A7UMW1</accession>
<proteinExistence type="evidence at transcript level"/>
<keyword id="KW-0511">Multifunctional enzyme</keyword>
<keyword id="KW-0596">Phosphopantetheine</keyword>
<keyword id="KW-0597">Phosphoprotein</keyword>
<keyword id="KW-0677">Repeat</keyword>
<keyword id="KW-0808">Transferase</keyword>
<keyword id="KW-0843">Virulence</keyword>